<reference key="1">
    <citation type="journal article" date="1996" name="J. Allergy Clin. Immunol.">
        <title>Complementary DNA cloning of the predominant allergen of bovine dander: a new member in the lipocalin family.</title>
        <authorList>
            <person name="Maentyjaervi R."/>
            <person name="Parkkinen S."/>
            <person name="Rytkoenen M."/>
            <person name="Pentikaeinen J."/>
            <person name="Pelkonen J."/>
            <person name="Rautiainen J."/>
            <person name="Virtanen T."/>
        </authorList>
    </citation>
    <scope>NUCLEOTIDE SEQUENCE [MRNA]</scope>
    <scope>ALLERGEN</scope>
    <source>
        <tissue>Skin</tissue>
    </source>
</reference>
<reference key="2">
    <citation type="journal article" date="1998" name="J. Protein Chem.">
        <title>A bovine dander allergen, comparative modeling, and similarities and differences in folding with related proteins.</title>
        <authorList>
            <person name="Santa H."/>
            <person name="Saarela J.T."/>
            <person name="Laatikainen R."/>
            <person name="Rautiainen J."/>
            <person name="Virtanen T."/>
            <person name="Rytkonen M."/>
            <person name="Maentyjaervi R."/>
        </authorList>
    </citation>
    <scope>3D-STRUCTURE MODELING</scope>
</reference>
<reference key="3">
    <citation type="journal article" date="1999" name="J. Biol. Chem.">
        <title>Probing the molecular basis of allergy. three-dimensional structure of the bovine lipocalin allergen Bos d 2.</title>
        <authorList>
            <person name="Rouvinen J."/>
            <person name="Rautiainen J."/>
            <person name="Virtanen T."/>
            <person name="Zeiler T."/>
            <person name="Kauppinen J."/>
            <person name="Taivainen A."/>
            <person name="Maentyjaervi R."/>
        </authorList>
    </citation>
    <scope>X-RAY CRYSTALLOGRAPHY (1.8 ANGSTROMS)</scope>
</reference>
<reference key="4">
    <citation type="journal article" date="1998" name="Biochem. Biophys. Res. Commun.">
        <title>Molecular and crystal properties of Bos d 2, an allergenic protein of the lipocalin family.</title>
        <authorList>
            <person name="Rautiainen J."/>
            <person name="Auriola S."/>
            <person name="Rouvinen J."/>
            <person name="Kauppinen J."/>
            <person name="Zeiler T."/>
            <person name="Novikov D."/>
            <person name="Virtanen T."/>
            <person name="Maentyjaervi R.A."/>
        </authorList>
    </citation>
    <scope>CHARACTERIZATION</scope>
    <scope>CRYSTALLIZATION</scope>
    <scope>PYROGLUTAMATE FORMATION AT GLN-17</scope>
</reference>
<reference key="5">
    <citation type="journal article" date="1998" name="J. Allergy Clin. Immunol.">
        <title>Tissue localization of bovine dander allergen Bos d 2.</title>
        <authorList>
            <person name="Rautiainen J."/>
            <person name="Rytkoenen M."/>
            <person name="Syrjaenen K."/>
            <person name="Pentikaeinen J."/>
            <person name="Zeiler T."/>
            <person name="Virtanen T."/>
            <person name="Maentyjaervi R."/>
        </authorList>
    </citation>
    <scope>TISSUE SPECIFICITY</scope>
</reference>
<keyword id="KW-0002">3D-structure</keyword>
<keyword id="KW-0020">Allergen</keyword>
<keyword id="KW-1015">Disulfide bond</keyword>
<keyword id="KW-0873">Pyrrolidone carboxylic acid</keyword>
<keyword id="KW-1185">Reference proteome</keyword>
<keyword id="KW-0964">Secreted</keyword>
<keyword id="KW-0732">Signal</keyword>
<keyword id="KW-0813">Transport</keyword>
<name>ALL2_BOVIN</name>
<evidence type="ECO:0000269" key="1">
    <source>
    </source>
</evidence>
<evidence type="ECO:0000269" key="2">
    <source>
    </source>
</evidence>
<evidence type="ECO:0000269" key="3">
    <source>
    </source>
</evidence>
<evidence type="ECO:0000305" key="4"/>
<evidence type="ECO:0007829" key="5">
    <source>
        <dbReference type="PDB" id="1BJ7"/>
    </source>
</evidence>
<evidence type="ECO:0007829" key="6">
    <source>
        <dbReference type="PDB" id="4WFU"/>
    </source>
</evidence>
<evidence type="ECO:0007829" key="7">
    <source>
        <dbReference type="PDB" id="4WFV"/>
    </source>
</evidence>
<feature type="signal peptide">
    <location>
        <begin position="1"/>
        <end position="16"/>
    </location>
</feature>
<feature type="chain" id="PRO_0000017983" description="Allergen Bos d 2">
    <location>
        <begin position="17"/>
        <end position="172"/>
    </location>
</feature>
<feature type="modified residue" description="Pyrrolidone carboxylic acid" evidence="3">
    <location>
        <position position="17"/>
    </location>
</feature>
<feature type="disulfide bond">
    <location>
        <begin position="60"/>
        <end position="64"/>
    </location>
</feature>
<feature type="disulfide bond">
    <location>
        <begin position="79"/>
        <end position="170"/>
    </location>
</feature>
<feature type="helix" evidence="7">
    <location>
        <begin position="25"/>
        <end position="27"/>
    </location>
</feature>
<feature type="strand" evidence="5">
    <location>
        <begin position="28"/>
        <end position="31"/>
    </location>
</feature>
<feature type="strand" evidence="7">
    <location>
        <begin position="33"/>
        <end position="41"/>
    </location>
</feature>
<feature type="helix" evidence="7">
    <location>
        <begin position="42"/>
        <end position="44"/>
    </location>
</feature>
<feature type="strand" evidence="7">
    <location>
        <begin position="54"/>
        <end position="61"/>
    </location>
</feature>
<feature type="turn" evidence="7">
    <location>
        <begin position="62"/>
        <end position="65"/>
    </location>
</feature>
<feature type="strand" evidence="7">
    <location>
        <begin position="66"/>
        <end position="75"/>
    </location>
</feature>
<feature type="strand" evidence="7">
    <location>
        <begin position="78"/>
        <end position="90"/>
    </location>
</feature>
<feature type="strand" evidence="7">
    <location>
        <begin position="93"/>
        <end position="109"/>
    </location>
</feature>
<feature type="strand" evidence="7">
    <location>
        <begin position="111"/>
        <end position="121"/>
    </location>
</feature>
<feature type="strand" evidence="7">
    <location>
        <begin position="126"/>
        <end position="138"/>
    </location>
</feature>
<feature type="helix" evidence="7">
    <location>
        <begin position="141"/>
        <end position="153"/>
    </location>
</feature>
<feature type="helix" evidence="7">
    <location>
        <begin position="158"/>
        <end position="160"/>
    </location>
</feature>
<feature type="strand" evidence="6">
    <location>
        <begin position="161"/>
        <end position="163"/>
    </location>
</feature>
<feature type="helix" evidence="7">
    <location>
        <begin position="165"/>
        <end position="167"/>
    </location>
</feature>
<protein>
    <recommendedName>
        <fullName>Allergen Bos d 2</fullName>
    </recommendedName>
    <alternativeName>
        <fullName>Dander major allergen BDA20</fullName>
    </alternativeName>
    <alternativeName>
        <fullName>Dermal allergen BDA20</fullName>
    </alternativeName>
    <allergenName>Bos d 2</allergenName>
</protein>
<organism>
    <name type="scientific">Bos taurus</name>
    <name type="common">Bovine</name>
    <dbReference type="NCBI Taxonomy" id="9913"/>
    <lineage>
        <taxon>Eukaryota</taxon>
        <taxon>Metazoa</taxon>
        <taxon>Chordata</taxon>
        <taxon>Craniata</taxon>
        <taxon>Vertebrata</taxon>
        <taxon>Euteleostomi</taxon>
        <taxon>Mammalia</taxon>
        <taxon>Eutheria</taxon>
        <taxon>Laurasiatheria</taxon>
        <taxon>Artiodactyla</taxon>
        <taxon>Ruminantia</taxon>
        <taxon>Pecora</taxon>
        <taxon>Bovidae</taxon>
        <taxon>Bovinae</taxon>
        <taxon>Bos</taxon>
    </lineage>
</organism>
<dbReference type="EMBL" id="L42867">
    <property type="protein sequence ID" value="AAB08720.1"/>
    <property type="molecule type" value="mRNA"/>
</dbReference>
<dbReference type="PIR" id="A59225">
    <property type="entry name" value="A59225"/>
</dbReference>
<dbReference type="PIR" id="B59225">
    <property type="entry name" value="B59225"/>
</dbReference>
<dbReference type="RefSeq" id="NP_777186.1">
    <property type="nucleotide sequence ID" value="NM_174761.2"/>
</dbReference>
<dbReference type="PDB" id="1BJ7">
    <property type="method" value="X-ray"/>
    <property type="resolution" value="1.80 A"/>
    <property type="chains" value="A=17-172"/>
</dbReference>
<dbReference type="PDB" id="4WFU">
    <property type="method" value="X-ray"/>
    <property type="resolution" value="1.75 A"/>
    <property type="chains" value="A=17-172"/>
</dbReference>
<dbReference type="PDB" id="4WFV">
    <property type="method" value="X-ray"/>
    <property type="resolution" value="1.40 A"/>
    <property type="chains" value="A=17-172"/>
</dbReference>
<dbReference type="PDBsum" id="1BJ7"/>
<dbReference type="PDBsum" id="4WFU"/>
<dbReference type="PDBsum" id="4WFV"/>
<dbReference type="SMR" id="Q28133"/>
<dbReference type="FunCoup" id="Q28133">
    <property type="interactions" value="1"/>
</dbReference>
<dbReference type="STRING" id="9913.ENSBTAP00000073562"/>
<dbReference type="Allergome" id="158">
    <property type="allergen name" value="Bos d 2"/>
</dbReference>
<dbReference type="Allergome" id="159">
    <property type="allergen name" value="Bos d 2.0101"/>
</dbReference>
<dbReference type="Allergome" id="160">
    <property type="allergen name" value="Bos d 2.0102"/>
</dbReference>
<dbReference type="Allergome" id="161">
    <property type="allergen name" value="Bos d 2.0103"/>
</dbReference>
<dbReference type="PaxDb" id="9913-ENSBTAP00000022376"/>
<dbReference type="GeneID" id="286791"/>
<dbReference type="KEGG" id="bta:286791"/>
<dbReference type="CTD" id="286791"/>
<dbReference type="VEuPathDB" id="HostDB:ENSBTAG00000016820"/>
<dbReference type="eggNOG" id="ENOG502TDZD">
    <property type="taxonomic scope" value="Eukaryota"/>
</dbReference>
<dbReference type="HOGENOM" id="CLU_094061_4_2_1"/>
<dbReference type="InParanoid" id="Q28133"/>
<dbReference type="OMA" id="DCTEGCD"/>
<dbReference type="OrthoDB" id="9450562at2759"/>
<dbReference type="TreeFam" id="TF338197"/>
<dbReference type="EvolutionaryTrace" id="Q28133"/>
<dbReference type="Proteomes" id="UP000009136">
    <property type="component" value="Chromosome X"/>
</dbReference>
<dbReference type="Bgee" id="ENSBTAG00000016820">
    <property type="expression patterns" value="Expressed in zone of skin and 31 other cell types or tissues"/>
</dbReference>
<dbReference type="GO" id="GO:0005615">
    <property type="term" value="C:extracellular space"/>
    <property type="evidence" value="ECO:0000318"/>
    <property type="project" value="GO_Central"/>
</dbReference>
<dbReference type="GO" id="GO:0005549">
    <property type="term" value="F:odorant binding"/>
    <property type="evidence" value="ECO:0000318"/>
    <property type="project" value="GO_Central"/>
</dbReference>
<dbReference type="GO" id="GO:0036094">
    <property type="term" value="F:small molecule binding"/>
    <property type="evidence" value="ECO:0007669"/>
    <property type="project" value="InterPro"/>
</dbReference>
<dbReference type="CDD" id="cd19427">
    <property type="entry name" value="lipocalin_OBP-like"/>
    <property type="match status" value="1"/>
</dbReference>
<dbReference type="Gene3D" id="2.40.128.20">
    <property type="match status" value="1"/>
</dbReference>
<dbReference type="InterPro" id="IPR012674">
    <property type="entry name" value="Calycin"/>
</dbReference>
<dbReference type="InterPro" id="IPR002345">
    <property type="entry name" value="Lipocalin"/>
</dbReference>
<dbReference type="InterPro" id="IPR000566">
    <property type="entry name" value="Lipocln_cytosolic_FA-bd_dom"/>
</dbReference>
<dbReference type="InterPro" id="IPR002448">
    <property type="entry name" value="OBP-like"/>
</dbReference>
<dbReference type="PANTHER" id="PTHR11430:SF89">
    <property type="entry name" value="ALLERGEN BOS D 2"/>
    <property type="match status" value="1"/>
</dbReference>
<dbReference type="PANTHER" id="PTHR11430">
    <property type="entry name" value="LIPOCALIN"/>
    <property type="match status" value="1"/>
</dbReference>
<dbReference type="Pfam" id="PF00061">
    <property type="entry name" value="Lipocalin"/>
    <property type="match status" value="1"/>
</dbReference>
<dbReference type="PRINTS" id="PR01173">
    <property type="entry name" value="ODORANTBNDNG"/>
</dbReference>
<dbReference type="SUPFAM" id="SSF50814">
    <property type="entry name" value="Lipocalins"/>
    <property type="match status" value="1"/>
</dbReference>
<proteinExistence type="evidence at protein level"/>
<comment type="function">
    <text>Probable pheromone carrier.</text>
</comment>
<comment type="subcellular location">
    <subcellularLocation>
        <location>Secreted</location>
    </subcellularLocation>
</comment>
<comment type="tissue specificity">
    <text evidence="2">Found exclusively in skin. Produced in sweat glands and transported to the skin surface.</text>
</comment>
<comment type="allergen">
    <text evidence="1">Causes an allergic reaction in human. Potent allergen of bovine dander.</text>
</comment>
<comment type="similarity">
    <text evidence="4">Belongs to the calycin superfamily. Lipocalin family.</text>
</comment>
<sequence length="172" mass="19560">MKAVFLTLLFGLVCTAQETPAEIDPSKIPGEWRIIYAAADNKDKIVEGGPLRNYYRRIECINDCESLSITFYLKDQGTCLLLTEVAKRQEGYVYVLEFYGTNTLEVIHVSENMLVTYVENYDGERITKMTEGLAKGTSFTPEELEKYQQLNSERGVPNENIENLIKTDNCPP</sequence>
<accession>Q28133</accession>